<proteinExistence type="evidence at protein level"/>
<dbReference type="EC" id="2.3.2.23" evidence="6 9 11"/>
<dbReference type="EC" id="2.3.2.24" evidence="5"/>
<dbReference type="EMBL" id="U73379">
    <property type="protein sequence ID" value="AAB53362.1"/>
    <property type="molecule type" value="mRNA"/>
</dbReference>
<dbReference type="EMBL" id="BT007300">
    <property type="protein sequence ID" value="AAP35964.1"/>
    <property type="molecule type" value="mRNA"/>
</dbReference>
<dbReference type="EMBL" id="AL050348">
    <property type="status" value="NOT_ANNOTATED_CDS"/>
    <property type="molecule type" value="Genomic_DNA"/>
</dbReference>
<dbReference type="EMBL" id="CH471077">
    <property type="protein sequence ID" value="EAW75804.1"/>
    <property type="molecule type" value="Genomic_DNA"/>
</dbReference>
<dbReference type="EMBL" id="CH471077">
    <property type="protein sequence ID" value="EAW75805.1"/>
    <property type="molecule type" value="Genomic_DNA"/>
</dbReference>
<dbReference type="EMBL" id="CH471077">
    <property type="protein sequence ID" value="EAW75806.1"/>
    <property type="molecule type" value="Genomic_DNA"/>
</dbReference>
<dbReference type="EMBL" id="CH471077">
    <property type="protein sequence ID" value="EAW75807.1"/>
    <property type="molecule type" value="Genomic_DNA"/>
</dbReference>
<dbReference type="EMBL" id="BC007656">
    <property type="protein sequence ID" value="AAH07656.1"/>
    <property type="molecule type" value="mRNA"/>
</dbReference>
<dbReference type="EMBL" id="BC016292">
    <property type="protein sequence ID" value="AAH16292.1"/>
    <property type="molecule type" value="mRNA"/>
</dbReference>
<dbReference type="EMBL" id="BC050736">
    <property type="protein sequence ID" value="AAH50736.1"/>
    <property type="molecule type" value="mRNA"/>
</dbReference>
<dbReference type="EMBL" id="BI858659">
    <property type="status" value="NOT_ANNOTATED_CDS"/>
    <property type="molecule type" value="mRNA"/>
</dbReference>
<dbReference type="EMBL" id="BM556795">
    <property type="status" value="NOT_ANNOTATED_CDS"/>
    <property type="molecule type" value="mRNA"/>
</dbReference>
<dbReference type="EMBL" id="BU844974">
    <property type="status" value="NOT_ANNOTATED_CDS"/>
    <property type="molecule type" value="mRNA"/>
</dbReference>
<dbReference type="CCDS" id="CCDS13370.1">
    <molecule id="O00762-1"/>
</dbReference>
<dbReference type="CCDS" id="CCDS13371.1">
    <molecule id="O00762-4"/>
</dbReference>
<dbReference type="CCDS" id="CCDS13372.1">
    <molecule id="O00762-3"/>
</dbReference>
<dbReference type="CCDS" id="CCDS13374.1">
    <molecule id="O00762-2"/>
</dbReference>
<dbReference type="RefSeq" id="NP_001268670.1">
    <property type="nucleotide sequence ID" value="NM_001281741.1"/>
</dbReference>
<dbReference type="RefSeq" id="NP_001268671.1">
    <property type="nucleotide sequence ID" value="NM_001281742.1"/>
</dbReference>
<dbReference type="RefSeq" id="NP_008950.1">
    <molecule id="O00762-1"/>
    <property type="nucleotide sequence ID" value="NM_007019.4"/>
</dbReference>
<dbReference type="RefSeq" id="NP_861515.1">
    <molecule id="O00762-4"/>
    <property type="nucleotide sequence ID" value="NM_181799.3"/>
</dbReference>
<dbReference type="RefSeq" id="NP_861516.1">
    <molecule id="O00762-3"/>
    <property type="nucleotide sequence ID" value="NM_181800.3"/>
</dbReference>
<dbReference type="RefSeq" id="NP_861517.1">
    <molecule id="O00762-2"/>
    <property type="nucleotide sequence ID" value="NM_181801.4"/>
</dbReference>
<dbReference type="PDB" id="1I7K">
    <property type="method" value="X-ray"/>
    <property type="resolution" value="1.95 A"/>
    <property type="chains" value="A/B=1-179"/>
</dbReference>
<dbReference type="PDB" id="4YII">
    <property type="method" value="X-ray"/>
    <property type="resolution" value="1.80 A"/>
    <property type="chains" value="U=27-179"/>
</dbReference>
<dbReference type="PDB" id="5A31">
    <property type="method" value="EM"/>
    <property type="resolution" value="4.30 A"/>
    <property type="chains" value="Q=29-173"/>
</dbReference>
<dbReference type="PDB" id="5KHR">
    <property type="method" value="EM"/>
    <property type="resolution" value="6.10 A"/>
    <property type="chains" value="Q=1-179"/>
</dbReference>
<dbReference type="PDB" id="5L9U">
    <property type="method" value="EM"/>
    <property type="resolution" value="6.40 A"/>
    <property type="chains" value="U=1-179"/>
</dbReference>
<dbReference type="PDB" id="8TAR">
    <property type="method" value="EM"/>
    <property type="resolution" value="4.00 A"/>
    <property type="chains" value="Q=29-173"/>
</dbReference>
<dbReference type="PDB" id="8TAU">
    <property type="method" value="EM"/>
    <property type="resolution" value="3.50 A"/>
    <property type="chains" value="Q=1-179"/>
</dbReference>
<dbReference type="PDBsum" id="1I7K"/>
<dbReference type="PDBsum" id="4YII"/>
<dbReference type="PDBsum" id="5A31"/>
<dbReference type="PDBsum" id="5KHR"/>
<dbReference type="PDBsum" id="5L9U"/>
<dbReference type="PDBsum" id="8TAR"/>
<dbReference type="PDBsum" id="8TAU"/>
<dbReference type="EMDB" id="EMD-2925"/>
<dbReference type="EMDB" id="EMD-41140"/>
<dbReference type="EMDB" id="EMD-41142"/>
<dbReference type="SMR" id="O00762"/>
<dbReference type="BioGRID" id="116249">
    <property type="interactions" value="98"/>
</dbReference>
<dbReference type="DIP" id="DIP-52725N"/>
<dbReference type="FunCoup" id="O00762">
    <property type="interactions" value="1522"/>
</dbReference>
<dbReference type="IntAct" id="O00762">
    <property type="interactions" value="16"/>
</dbReference>
<dbReference type="MINT" id="O00762"/>
<dbReference type="STRING" id="9606.ENSP00000348838"/>
<dbReference type="ChEMBL" id="CHEMBL4105834"/>
<dbReference type="iPTMnet" id="O00762"/>
<dbReference type="PhosphoSitePlus" id="O00762"/>
<dbReference type="SwissPalm" id="O00762"/>
<dbReference type="BioMuta" id="UBE2C"/>
<dbReference type="CPTAC" id="CPTAC-1465"/>
<dbReference type="CPTAC" id="CPTAC-1466"/>
<dbReference type="CPTAC" id="CPTAC-1467"/>
<dbReference type="CPTAC" id="CPTAC-1468"/>
<dbReference type="CPTAC" id="CPTAC-3259"/>
<dbReference type="CPTAC" id="CPTAC-3260"/>
<dbReference type="CPTAC" id="CPTAC-715"/>
<dbReference type="CPTAC" id="CPTAC-716"/>
<dbReference type="jPOST" id="O00762"/>
<dbReference type="MassIVE" id="O00762"/>
<dbReference type="PaxDb" id="9606-ENSP00000348838"/>
<dbReference type="PeptideAtlas" id="O00762"/>
<dbReference type="ProteomicsDB" id="15210"/>
<dbReference type="ProteomicsDB" id="1657"/>
<dbReference type="ProteomicsDB" id="33704"/>
<dbReference type="ProteomicsDB" id="48021">
    <molecule id="O00762-1"/>
</dbReference>
<dbReference type="Pumba" id="O00762"/>
<dbReference type="TopDownProteomics" id="O00762-1">
    <molecule id="O00762-1"/>
</dbReference>
<dbReference type="TopDownProteomics" id="O00762-3">
    <molecule id="O00762-3"/>
</dbReference>
<dbReference type="ABCD" id="O00762">
    <property type="antibodies" value="2 sequenced antibodies"/>
</dbReference>
<dbReference type="Antibodypedia" id="27753">
    <property type="antibodies" value="498 antibodies from 37 providers"/>
</dbReference>
<dbReference type="CPTC" id="O00762">
    <property type="antibodies" value="3 antibodies"/>
</dbReference>
<dbReference type="DNASU" id="11065"/>
<dbReference type="Ensembl" id="ENST00000335046.7">
    <molecule id="O00762-4"/>
    <property type="protein sequence ID" value="ENSP00000335674.3"/>
    <property type="gene ID" value="ENSG00000175063.17"/>
</dbReference>
<dbReference type="Ensembl" id="ENST00000352551.9">
    <molecule id="O00762-3"/>
    <property type="protein sequence ID" value="ENSP00000333975.5"/>
    <property type="gene ID" value="ENSG00000175063.17"/>
</dbReference>
<dbReference type="Ensembl" id="ENST00000356455.9">
    <molecule id="O00762-1"/>
    <property type="protein sequence ID" value="ENSP00000348838.4"/>
    <property type="gene ID" value="ENSG00000175063.17"/>
</dbReference>
<dbReference type="Ensembl" id="ENST00000372568.4">
    <molecule id="O00762-2"/>
    <property type="protein sequence ID" value="ENSP00000361649.4"/>
    <property type="gene ID" value="ENSG00000175063.17"/>
</dbReference>
<dbReference type="GeneID" id="11065"/>
<dbReference type="KEGG" id="hsa:11065"/>
<dbReference type="MANE-Select" id="ENST00000356455.9">
    <property type="protein sequence ID" value="ENSP00000348838.4"/>
    <property type="RefSeq nucleotide sequence ID" value="NM_007019.4"/>
    <property type="RefSeq protein sequence ID" value="NP_008950.1"/>
</dbReference>
<dbReference type="UCSC" id="uc002xpl.5">
    <molecule id="O00762-1"/>
    <property type="organism name" value="human"/>
</dbReference>
<dbReference type="AGR" id="HGNC:15937"/>
<dbReference type="CTD" id="11065"/>
<dbReference type="DisGeNET" id="11065"/>
<dbReference type="GeneCards" id="UBE2C"/>
<dbReference type="HGNC" id="HGNC:15937">
    <property type="gene designation" value="UBE2C"/>
</dbReference>
<dbReference type="HPA" id="ENSG00000175063">
    <property type="expression patterns" value="Tissue enhanced (bone marrow, lymphoid tissue)"/>
</dbReference>
<dbReference type="MIM" id="605574">
    <property type="type" value="gene"/>
</dbReference>
<dbReference type="neXtProt" id="NX_O00762"/>
<dbReference type="OpenTargets" id="ENSG00000175063"/>
<dbReference type="PharmGKB" id="PA38057"/>
<dbReference type="VEuPathDB" id="HostDB:ENSG00000175063"/>
<dbReference type="eggNOG" id="KOG0421">
    <property type="taxonomic scope" value="Eukaryota"/>
</dbReference>
<dbReference type="GeneTree" id="ENSGT00930000150941"/>
<dbReference type="HOGENOM" id="CLU_030988_9_2_1"/>
<dbReference type="InParanoid" id="O00762"/>
<dbReference type="OMA" id="PKDNHAV"/>
<dbReference type="OrthoDB" id="9516220at2759"/>
<dbReference type="PAN-GO" id="O00762">
    <property type="GO annotations" value="5 GO annotations based on evolutionary models"/>
</dbReference>
<dbReference type="PhylomeDB" id="O00762"/>
<dbReference type="TreeFam" id="TF101116"/>
<dbReference type="BRENDA" id="2.3.2.23">
    <property type="organism ID" value="2681"/>
</dbReference>
<dbReference type="BRENDA" id="2.3.2.24">
    <property type="organism ID" value="2681"/>
</dbReference>
<dbReference type="PathwayCommons" id="O00762"/>
<dbReference type="Reactome" id="R-HSA-141430">
    <property type="pathway name" value="Inactivation of APC/C via direct inhibition of the APC/C complex"/>
</dbReference>
<dbReference type="Reactome" id="R-HSA-174048">
    <property type="pathway name" value="APC/C:Cdc20 mediated degradation of Cyclin B"/>
</dbReference>
<dbReference type="Reactome" id="R-HSA-174084">
    <property type="pathway name" value="Autodegradation of Cdh1 by Cdh1:APC/C"/>
</dbReference>
<dbReference type="Reactome" id="R-HSA-174154">
    <property type="pathway name" value="APC/C:Cdc20 mediated degradation of Securin"/>
</dbReference>
<dbReference type="Reactome" id="R-HSA-174178">
    <property type="pathway name" value="APC/C:Cdh1 mediated degradation of Cdc20 and other APC/C:Cdh1 targeted proteins in late mitosis/early G1"/>
</dbReference>
<dbReference type="Reactome" id="R-HSA-174184">
    <property type="pathway name" value="Cdc20:Phospho-APC/C mediated degradation of Cyclin A"/>
</dbReference>
<dbReference type="Reactome" id="R-HSA-176407">
    <property type="pathway name" value="Conversion from APC/C:Cdc20 to APC/C:Cdh1 in late anaphase"/>
</dbReference>
<dbReference type="Reactome" id="R-HSA-176408">
    <property type="pathway name" value="Regulation of APC/C activators between G1/S and early anaphase"/>
</dbReference>
<dbReference type="Reactome" id="R-HSA-176409">
    <property type="pathway name" value="APC/C:Cdc20 mediated degradation of mitotic proteins"/>
</dbReference>
<dbReference type="Reactome" id="R-HSA-176412">
    <property type="pathway name" value="Phosphorylation of the APC/C"/>
</dbReference>
<dbReference type="Reactome" id="R-HSA-179409">
    <property type="pathway name" value="APC-Cdc20 mediated degradation of Nek2A"/>
</dbReference>
<dbReference type="Reactome" id="R-HSA-2467813">
    <property type="pathway name" value="Separation of Sister Chromatids"/>
</dbReference>
<dbReference type="Reactome" id="R-HSA-2559582">
    <property type="pathway name" value="Senescence-Associated Secretory Phenotype (SASP)"/>
</dbReference>
<dbReference type="Reactome" id="R-HSA-68867">
    <property type="pathway name" value="Assembly of the pre-replicative complex"/>
</dbReference>
<dbReference type="Reactome" id="R-HSA-69017">
    <property type="pathway name" value="CDK-mediated phosphorylation and removal of Cdc6"/>
</dbReference>
<dbReference type="Reactome" id="R-HSA-8853884">
    <property type="pathway name" value="Transcriptional Regulation by VENTX"/>
</dbReference>
<dbReference type="Reactome" id="R-HSA-8866652">
    <property type="pathway name" value="Synthesis of active ubiquitin: roles of E1 and E2 enzymes"/>
</dbReference>
<dbReference type="Reactome" id="R-HSA-9687136">
    <property type="pathway name" value="Aberrant regulation of mitotic exit in cancer due to RB1 defects"/>
</dbReference>
<dbReference type="Reactome" id="R-HSA-983168">
    <property type="pathway name" value="Antigen processing: Ubiquitination &amp; Proteasome degradation"/>
</dbReference>
<dbReference type="SignaLink" id="O00762"/>
<dbReference type="SIGNOR" id="O00762"/>
<dbReference type="UniPathway" id="UPA00143"/>
<dbReference type="BioGRID-ORCS" id="11065">
    <property type="hits" value="449 hits in 1173 CRISPR screens"/>
</dbReference>
<dbReference type="ChiTaRS" id="UBE2C">
    <property type="organism name" value="human"/>
</dbReference>
<dbReference type="EvolutionaryTrace" id="O00762"/>
<dbReference type="GeneWiki" id="UBE2C"/>
<dbReference type="GenomeRNAi" id="11065"/>
<dbReference type="Pharos" id="O00762">
    <property type="development level" value="Tbio"/>
</dbReference>
<dbReference type="PRO" id="PR:O00762"/>
<dbReference type="Proteomes" id="UP000005640">
    <property type="component" value="Chromosome 20"/>
</dbReference>
<dbReference type="RNAct" id="O00762">
    <property type="molecule type" value="protein"/>
</dbReference>
<dbReference type="Bgee" id="ENSG00000175063">
    <property type="expression patterns" value="Expressed in ventricular zone and 160 other cell types or tissues"/>
</dbReference>
<dbReference type="ExpressionAtlas" id="O00762">
    <property type="expression patterns" value="baseline and differential"/>
</dbReference>
<dbReference type="GO" id="GO:0005680">
    <property type="term" value="C:anaphase-promoting complex"/>
    <property type="evidence" value="ECO:0000314"/>
    <property type="project" value="UniProtKB"/>
</dbReference>
<dbReference type="GO" id="GO:0005829">
    <property type="term" value="C:cytosol"/>
    <property type="evidence" value="ECO:0000314"/>
    <property type="project" value="HPA"/>
</dbReference>
<dbReference type="GO" id="GO:0005654">
    <property type="term" value="C:nucleoplasm"/>
    <property type="evidence" value="ECO:0000304"/>
    <property type="project" value="Reactome"/>
</dbReference>
<dbReference type="GO" id="GO:0005634">
    <property type="term" value="C:nucleus"/>
    <property type="evidence" value="ECO:0000318"/>
    <property type="project" value="GO_Central"/>
</dbReference>
<dbReference type="GO" id="GO:0005886">
    <property type="term" value="C:plasma membrane"/>
    <property type="evidence" value="ECO:0000314"/>
    <property type="project" value="HPA"/>
</dbReference>
<dbReference type="GO" id="GO:0000151">
    <property type="term" value="C:ubiquitin ligase complex"/>
    <property type="evidence" value="ECO:0000314"/>
    <property type="project" value="UniProtKB"/>
</dbReference>
<dbReference type="GO" id="GO:0005524">
    <property type="term" value="F:ATP binding"/>
    <property type="evidence" value="ECO:0007669"/>
    <property type="project" value="UniProtKB-KW"/>
</dbReference>
<dbReference type="GO" id="GO:0061631">
    <property type="term" value="F:ubiquitin conjugating enzyme activity"/>
    <property type="evidence" value="ECO:0000314"/>
    <property type="project" value="UniProtKB"/>
</dbReference>
<dbReference type="GO" id="GO:0061630">
    <property type="term" value="F:ubiquitin protein ligase activity"/>
    <property type="evidence" value="ECO:0000304"/>
    <property type="project" value="Reactome"/>
</dbReference>
<dbReference type="GO" id="GO:0044389">
    <property type="term" value="F:ubiquitin-like protein ligase binding"/>
    <property type="evidence" value="ECO:0000353"/>
    <property type="project" value="UniProtKB"/>
</dbReference>
<dbReference type="GO" id="GO:0004842">
    <property type="term" value="F:ubiquitin-protein transferase activity"/>
    <property type="evidence" value="ECO:0000314"/>
    <property type="project" value="UniProtKB"/>
</dbReference>
<dbReference type="GO" id="GO:0031145">
    <property type="term" value="P:anaphase-promoting complex-dependent catabolic process"/>
    <property type="evidence" value="ECO:0000314"/>
    <property type="project" value="UniProtKB"/>
</dbReference>
<dbReference type="GO" id="GO:0051301">
    <property type="term" value="P:cell division"/>
    <property type="evidence" value="ECO:0007669"/>
    <property type="project" value="UniProtKB-KW"/>
</dbReference>
<dbReference type="GO" id="GO:0010458">
    <property type="term" value="P:exit from mitosis"/>
    <property type="evidence" value="ECO:0000315"/>
    <property type="project" value="UniProtKB"/>
</dbReference>
<dbReference type="GO" id="GO:0010994">
    <property type="term" value="P:free ubiquitin chain polymerization"/>
    <property type="evidence" value="ECO:0000314"/>
    <property type="project" value="UniProtKB"/>
</dbReference>
<dbReference type="GO" id="GO:0031536">
    <property type="term" value="P:positive regulation of exit from mitosis"/>
    <property type="evidence" value="ECO:0000315"/>
    <property type="project" value="UniProtKB"/>
</dbReference>
<dbReference type="GO" id="GO:0045842">
    <property type="term" value="P:positive regulation of mitotic metaphase/anaphase transition"/>
    <property type="evidence" value="ECO:0000314"/>
    <property type="project" value="UniProt"/>
</dbReference>
<dbReference type="GO" id="GO:1904668">
    <property type="term" value="P:positive regulation of ubiquitin protein ligase activity"/>
    <property type="evidence" value="ECO:0000304"/>
    <property type="project" value="UniProtKB"/>
</dbReference>
<dbReference type="GO" id="GO:0043161">
    <property type="term" value="P:proteasome-mediated ubiquitin-dependent protein catabolic process"/>
    <property type="evidence" value="ECO:0000314"/>
    <property type="project" value="UniProt"/>
</dbReference>
<dbReference type="GO" id="GO:0070979">
    <property type="term" value="P:protein K11-linked ubiquitination"/>
    <property type="evidence" value="ECO:0000314"/>
    <property type="project" value="UniProtKB"/>
</dbReference>
<dbReference type="GO" id="GO:0070936">
    <property type="term" value="P:protein K48-linked ubiquitination"/>
    <property type="evidence" value="ECO:0000314"/>
    <property type="project" value="UniProtKB"/>
</dbReference>
<dbReference type="GO" id="GO:0000209">
    <property type="term" value="P:protein polyubiquitination"/>
    <property type="evidence" value="ECO:0000318"/>
    <property type="project" value="GO_Central"/>
</dbReference>
<dbReference type="GO" id="GO:0016567">
    <property type="term" value="P:protein ubiquitination"/>
    <property type="evidence" value="ECO:0000314"/>
    <property type="project" value="UniProtKB"/>
</dbReference>
<dbReference type="GO" id="GO:0030071">
    <property type="term" value="P:regulation of mitotic metaphase/anaphase transition"/>
    <property type="evidence" value="ECO:0000318"/>
    <property type="project" value="GO_Central"/>
</dbReference>
<dbReference type="GO" id="GO:0006511">
    <property type="term" value="P:ubiquitin-dependent protein catabolic process"/>
    <property type="evidence" value="ECO:0000314"/>
    <property type="project" value="UniProtKB"/>
</dbReference>
<dbReference type="CDD" id="cd23791">
    <property type="entry name" value="UBCc_UBE2C"/>
    <property type="match status" value="1"/>
</dbReference>
<dbReference type="FunFam" id="3.10.110.10:FF:000039">
    <property type="entry name" value="Ubiquitin-conjugating enzyme E2 C"/>
    <property type="match status" value="1"/>
</dbReference>
<dbReference type="Gene3D" id="3.10.110.10">
    <property type="entry name" value="Ubiquitin Conjugating Enzyme"/>
    <property type="match status" value="1"/>
</dbReference>
<dbReference type="InterPro" id="IPR050113">
    <property type="entry name" value="Ub_conjugating_enzyme"/>
</dbReference>
<dbReference type="InterPro" id="IPR000608">
    <property type="entry name" value="UBQ-conjugat_E2_core"/>
</dbReference>
<dbReference type="InterPro" id="IPR023313">
    <property type="entry name" value="UBQ-conjugating_AS"/>
</dbReference>
<dbReference type="InterPro" id="IPR016135">
    <property type="entry name" value="UBQ-conjugating_enzyme/RWD"/>
</dbReference>
<dbReference type="PANTHER" id="PTHR24067">
    <property type="entry name" value="UBIQUITIN-CONJUGATING ENZYME E2"/>
    <property type="match status" value="1"/>
</dbReference>
<dbReference type="Pfam" id="PF00179">
    <property type="entry name" value="UQ_con"/>
    <property type="match status" value="1"/>
</dbReference>
<dbReference type="SMART" id="SM00212">
    <property type="entry name" value="UBCc"/>
    <property type="match status" value="1"/>
</dbReference>
<dbReference type="SUPFAM" id="SSF54495">
    <property type="entry name" value="UBC-like"/>
    <property type="match status" value="1"/>
</dbReference>
<dbReference type="PROSITE" id="PS00183">
    <property type="entry name" value="UBC_1"/>
    <property type="match status" value="1"/>
</dbReference>
<dbReference type="PROSITE" id="PS50127">
    <property type="entry name" value="UBC_2"/>
    <property type="match status" value="1"/>
</dbReference>
<name>UBE2C_HUMAN</name>
<organism>
    <name type="scientific">Homo sapiens</name>
    <name type="common">Human</name>
    <dbReference type="NCBI Taxonomy" id="9606"/>
    <lineage>
        <taxon>Eukaryota</taxon>
        <taxon>Metazoa</taxon>
        <taxon>Chordata</taxon>
        <taxon>Craniata</taxon>
        <taxon>Vertebrata</taxon>
        <taxon>Euteleostomi</taxon>
        <taxon>Mammalia</taxon>
        <taxon>Eutheria</taxon>
        <taxon>Euarchontoglires</taxon>
        <taxon>Primates</taxon>
        <taxon>Haplorrhini</taxon>
        <taxon>Catarrhini</taxon>
        <taxon>Hominidae</taxon>
        <taxon>Homo</taxon>
    </lineage>
</organism>
<keyword id="KW-0002">3D-structure</keyword>
<keyword id="KW-0007">Acetylation</keyword>
<keyword id="KW-0025">Alternative splicing</keyword>
<keyword id="KW-0067">ATP-binding</keyword>
<keyword id="KW-0131">Cell cycle</keyword>
<keyword id="KW-0132">Cell division</keyword>
<keyword id="KW-0498">Mitosis</keyword>
<keyword id="KW-0547">Nucleotide-binding</keyword>
<keyword id="KW-0597">Phosphoprotein</keyword>
<keyword id="KW-1267">Proteomics identification</keyword>
<keyword id="KW-1185">Reference proteome</keyword>
<keyword id="KW-0808">Transferase</keyword>
<keyword id="KW-0832">Ubl conjugation</keyword>
<keyword id="KW-0833">Ubl conjugation pathway</keyword>
<reference key="1">
    <citation type="journal article" date="1997" name="Proc. Natl. Acad. Sci. U.S.A.">
        <title>Dominant-negative cyclin-selective ubiquitin carrier protein E2-C/UbcH10 blocks cells in metaphase.</title>
        <authorList>
            <person name="Townsley F.M."/>
            <person name="Aristarkhov A."/>
            <person name="Beck S."/>
            <person name="Hershko A."/>
            <person name="Ruderman J.V."/>
        </authorList>
    </citation>
    <scope>NUCLEOTIDE SEQUENCE [MRNA] (ISOFORM 1)</scope>
    <scope>MUTAGENESIS OF CYS-114</scope>
</reference>
<reference key="2">
    <citation type="submission" date="2004-10" db="EMBL/GenBank/DDBJ databases">
        <title>Cloning of human full-length CDSs in BD Creator(TM) system donor vector.</title>
        <authorList>
            <person name="Kalnine N."/>
            <person name="Chen X."/>
            <person name="Rolfs A."/>
            <person name="Halleck A."/>
            <person name="Hines L."/>
            <person name="Eisenstein S."/>
            <person name="Koundinya M."/>
            <person name="Raphael J."/>
            <person name="Moreira D."/>
            <person name="Kelley T."/>
            <person name="LaBaer J."/>
            <person name="Lin Y."/>
            <person name="Phelan M."/>
            <person name="Farmer A."/>
        </authorList>
    </citation>
    <scope>NUCLEOTIDE SEQUENCE [LARGE SCALE MRNA] (ISOFORM 1)</scope>
</reference>
<reference key="3">
    <citation type="journal article" date="2001" name="Nature">
        <title>The DNA sequence and comparative analysis of human chromosome 20.</title>
        <authorList>
            <person name="Deloukas P."/>
            <person name="Matthews L.H."/>
            <person name="Ashurst J.L."/>
            <person name="Burton J."/>
            <person name="Gilbert J.G.R."/>
            <person name="Jones M."/>
            <person name="Stavrides G."/>
            <person name="Almeida J.P."/>
            <person name="Babbage A.K."/>
            <person name="Bagguley C.L."/>
            <person name="Bailey J."/>
            <person name="Barlow K.F."/>
            <person name="Bates K.N."/>
            <person name="Beard L.M."/>
            <person name="Beare D.M."/>
            <person name="Beasley O.P."/>
            <person name="Bird C.P."/>
            <person name="Blakey S.E."/>
            <person name="Bridgeman A.M."/>
            <person name="Brown A.J."/>
            <person name="Buck D."/>
            <person name="Burrill W.D."/>
            <person name="Butler A.P."/>
            <person name="Carder C."/>
            <person name="Carter N.P."/>
            <person name="Chapman J.C."/>
            <person name="Clamp M."/>
            <person name="Clark G."/>
            <person name="Clark L.N."/>
            <person name="Clark S.Y."/>
            <person name="Clee C.M."/>
            <person name="Clegg S."/>
            <person name="Cobley V.E."/>
            <person name="Collier R.E."/>
            <person name="Connor R.E."/>
            <person name="Corby N.R."/>
            <person name="Coulson A."/>
            <person name="Coville G.J."/>
            <person name="Deadman R."/>
            <person name="Dhami P.D."/>
            <person name="Dunn M."/>
            <person name="Ellington A.G."/>
            <person name="Frankland J.A."/>
            <person name="Fraser A."/>
            <person name="French L."/>
            <person name="Garner P."/>
            <person name="Grafham D.V."/>
            <person name="Griffiths C."/>
            <person name="Griffiths M.N.D."/>
            <person name="Gwilliam R."/>
            <person name="Hall R.E."/>
            <person name="Hammond S."/>
            <person name="Harley J.L."/>
            <person name="Heath P.D."/>
            <person name="Ho S."/>
            <person name="Holden J.L."/>
            <person name="Howden P.J."/>
            <person name="Huckle E."/>
            <person name="Hunt A.R."/>
            <person name="Hunt S.E."/>
            <person name="Jekosch K."/>
            <person name="Johnson C.M."/>
            <person name="Johnson D."/>
            <person name="Kay M.P."/>
            <person name="Kimberley A.M."/>
            <person name="King A."/>
            <person name="Knights A."/>
            <person name="Laird G.K."/>
            <person name="Lawlor S."/>
            <person name="Lehvaeslaiho M.H."/>
            <person name="Leversha M.A."/>
            <person name="Lloyd C."/>
            <person name="Lloyd D.M."/>
            <person name="Lovell J.D."/>
            <person name="Marsh V.L."/>
            <person name="Martin S.L."/>
            <person name="McConnachie L.J."/>
            <person name="McLay K."/>
            <person name="McMurray A.A."/>
            <person name="Milne S.A."/>
            <person name="Mistry D."/>
            <person name="Moore M.J.F."/>
            <person name="Mullikin J.C."/>
            <person name="Nickerson T."/>
            <person name="Oliver K."/>
            <person name="Parker A."/>
            <person name="Patel R."/>
            <person name="Pearce T.A.V."/>
            <person name="Peck A.I."/>
            <person name="Phillimore B.J.C.T."/>
            <person name="Prathalingam S.R."/>
            <person name="Plumb R.W."/>
            <person name="Ramsay H."/>
            <person name="Rice C.M."/>
            <person name="Ross M.T."/>
            <person name="Scott C.E."/>
            <person name="Sehra H.K."/>
            <person name="Shownkeen R."/>
            <person name="Sims S."/>
            <person name="Skuce C.D."/>
            <person name="Smith M.L."/>
            <person name="Soderlund C."/>
            <person name="Steward C.A."/>
            <person name="Sulston J.E."/>
            <person name="Swann R.M."/>
            <person name="Sycamore N."/>
            <person name="Taylor R."/>
            <person name="Tee L."/>
            <person name="Thomas D.W."/>
            <person name="Thorpe A."/>
            <person name="Tracey A."/>
            <person name="Tromans A.C."/>
            <person name="Vaudin M."/>
            <person name="Wall M."/>
            <person name="Wallis J.M."/>
            <person name="Whitehead S.L."/>
            <person name="Whittaker P."/>
            <person name="Willey D.L."/>
            <person name="Williams L."/>
            <person name="Williams S.A."/>
            <person name="Wilming L."/>
            <person name="Wray P.W."/>
            <person name="Hubbard T."/>
            <person name="Durbin R.M."/>
            <person name="Bentley D.R."/>
            <person name="Beck S."/>
            <person name="Rogers J."/>
        </authorList>
    </citation>
    <scope>NUCLEOTIDE SEQUENCE [LARGE SCALE GENOMIC DNA]</scope>
</reference>
<reference key="4">
    <citation type="submission" date="2005-09" db="EMBL/GenBank/DDBJ databases">
        <authorList>
            <person name="Mural R.J."/>
            <person name="Istrail S."/>
            <person name="Sutton G."/>
            <person name="Florea L."/>
            <person name="Halpern A.L."/>
            <person name="Mobarry C.M."/>
            <person name="Lippert R."/>
            <person name="Walenz B."/>
            <person name="Shatkay H."/>
            <person name="Dew I."/>
            <person name="Miller J.R."/>
            <person name="Flanigan M.J."/>
            <person name="Edwards N.J."/>
            <person name="Bolanos R."/>
            <person name="Fasulo D."/>
            <person name="Halldorsson B.V."/>
            <person name="Hannenhalli S."/>
            <person name="Turner R."/>
            <person name="Yooseph S."/>
            <person name="Lu F."/>
            <person name="Nusskern D.R."/>
            <person name="Shue B.C."/>
            <person name="Zheng X.H."/>
            <person name="Zhong F."/>
            <person name="Delcher A.L."/>
            <person name="Huson D.H."/>
            <person name="Kravitz S.A."/>
            <person name="Mouchard L."/>
            <person name="Reinert K."/>
            <person name="Remington K.A."/>
            <person name="Clark A.G."/>
            <person name="Waterman M.S."/>
            <person name="Eichler E.E."/>
            <person name="Adams M.D."/>
            <person name="Hunkapiller M.W."/>
            <person name="Myers E.W."/>
            <person name="Venter J.C."/>
        </authorList>
    </citation>
    <scope>NUCLEOTIDE SEQUENCE [LARGE SCALE GENOMIC DNA]</scope>
</reference>
<reference key="5">
    <citation type="journal article" date="2004" name="Genome Res.">
        <title>The status, quality, and expansion of the NIH full-length cDNA project: the Mammalian Gene Collection (MGC).</title>
        <authorList>
            <consortium name="The MGC Project Team"/>
        </authorList>
    </citation>
    <scope>NUCLEOTIDE SEQUENCE [LARGE SCALE MRNA] (ISOFORMS 1; 2; 3 AND 4)</scope>
    <source>
        <tissue>Lung adenocarcinoma</tissue>
        <tissue>Lymph</tissue>
        <tissue>Melanoma</tissue>
        <tissue>Teratocarcinoma</tissue>
        <tissue>Uterus</tissue>
    </source>
</reference>
<reference key="6">
    <citation type="journal article" date="2004" name="Nature">
        <title>Autonomous regulation of the anaphase-promoting complex couples mitosis to S-phase entry.</title>
        <authorList>
            <person name="Rape M."/>
            <person name="Kirschner M.W."/>
        </authorList>
    </citation>
    <scope>FUNCTION</scope>
    <scope>UBIQUITINATION</scope>
    <scope>MUTAGENESIS OF CYS-114</scope>
</reference>
<reference key="7">
    <citation type="journal article" date="2007" name="Mol. Cell">
        <title>E3-independent monoubiquitination of ubiquitin-binding proteins.</title>
        <authorList>
            <person name="Hoeller D."/>
            <person name="Hecker C.M."/>
            <person name="Wagner S."/>
            <person name="Rogov V."/>
            <person name="Doetsch V."/>
            <person name="Dikic I."/>
        </authorList>
    </citation>
    <scope>CATALYTIC ACTIVITY AS E3-INDEPENDENT E2 UBIQUITIN-CONJUGATING ENZYME</scope>
</reference>
<reference key="8">
    <citation type="journal article" date="2008" name="Cell">
        <title>Mechanism of ubiquitin-chain formation by the human anaphase-promoting complex.</title>
        <authorList>
            <person name="Jin L."/>
            <person name="Williamson A."/>
            <person name="Banerjee S."/>
            <person name="Philipp I."/>
            <person name="Rape M."/>
        </authorList>
    </citation>
    <scope>FUNCTION</scope>
    <scope>CATALYTIC ACTIVITY</scope>
    <scope>PATHWAY</scope>
</reference>
<reference key="9">
    <citation type="journal article" date="2009" name="Anal. Chem.">
        <title>Lys-N and trypsin cover complementary parts of the phosphoproteome in a refined SCX-based approach.</title>
        <authorList>
            <person name="Gauci S."/>
            <person name="Helbig A.O."/>
            <person name="Slijper M."/>
            <person name="Krijgsveld J."/>
            <person name="Heck A.J."/>
            <person name="Mohammed S."/>
        </authorList>
    </citation>
    <scope>ACETYLATION [LARGE SCALE ANALYSIS] AT ALA-2</scope>
    <scope>CLEAVAGE OF INITIATOR METHIONINE [LARGE SCALE ANALYSIS]</scope>
    <scope>IDENTIFICATION BY MASS SPECTROMETRY [LARGE SCALE ANALYSIS]</scope>
</reference>
<reference key="10">
    <citation type="journal article" date="2009" name="Nat. Cell Biol.">
        <title>UBE2S elongates ubiquitin chains on APC/C substrates to promote mitotic exit.</title>
        <authorList>
            <person name="Garnett M.J."/>
            <person name="Mansfeld J."/>
            <person name="Godwin C."/>
            <person name="Matsusaka T."/>
            <person name="Wu J."/>
            <person name="Russell P."/>
            <person name="Pines J."/>
            <person name="Venkitaraman A.R."/>
        </authorList>
    </citation>
    <scope>FUNCTION</scope>
</reference>
<reference key="11">
    <citation type="journal article" date="2009" name="Proc. Natl. Acad. Sci. U.S.A.">
        <title>Identification of a physiological E2 module for the human anaphase-promoting complex.</title>
        <authorList>
            <person name="Williamson A."/>
            <person name="Wickliffe K.E."/>
            <person name="Mellone B.G."/>
            <person name="Song L."/>
            <person name="Karpen G.H."/>
            <person name="Rape M."/>
        </authorList>
    </citation>
    <scope>FUNCTION</scope>
</reference>
<reference key="12">
    <citation type="journal article" date="2010" name="J. Biol. Chem.">
        <title>The E2 ubiquitin-conjugating enzymes direct polyubiquitination to preferred lysines.</title>
        <authorList>
            <person name="David Y."/>
            <person name="Ziv T."/>
            <person name="Admon A."/>
            <person name="Navon A."/>
        </authorList>
    </citation>
    <scope>FUNCTION</scope>
    <scope>CATALYTIC ACTIVITY</scope>
</reference>
<reference key="13">
    <citation type="journal article" date="2011" name="BMC Syst. Biol.">
        <title>Initial characterization of the human central proteome.</title>
        <authorList>
            <person name="Burkard T.R."/>
            <person name="Planyavsky M."/>
            <person name="Kaupe I."/>
            <person name="Breitwieser F.P."/>
            <person name="Buerckstuemmer T."/>
            <person name="Bennett K.L."/>
            <person name="Superti-Furga G."/>
            <person name="Colinge J."/>
        </authorList>
    </citation>
    <scope>IDENTIFICATION BY MASS SPECTROMETRY [LARGE SCALE ANALYSIS]</scope>
</reference>
<reference key="14">
    <citation type="journal article" date="2011" name="Sci. Signal.">
        <title>System-wide temporal characterization of the proteome and phosphoproteome of human embryonic stem cell differentiation.</title>
        <authorList>
            <person name="Rigbolt K.T."/>
            <person name="Prokhorova T.A."/>
            <person name="Akimov V."/>
            <person name="Henningsen J."/>
            <person name="Johansen P.T."/>
            <person name="Kratchmarova I."/>
            <person name="Kassem M."/>
            <person name="Mann M."/>
            <person name="Olsen J.V."/>
            <person name="Blagoev B."/>
        </authorList>
    </citation>
    <scope>ACETYLATION [LARGE SCALE ANALYSIS] AT ALA-2</scope>
    <scope>PHOSPHORYLATION [LARGE SCALE ANALYSIS] AT SER-3</scope>
    <scope>CLEAVAGE OF INITIATOR METHIONINE [LARGE SCALE ANALYSIS]</scope>
    <scope>IDENTIFICATION BY MASS SPECTROMETRY [LARGE SCALE ANALYSIS]</scope>
</reference>
<reference key="15">
    <citation type="journal article" date="2013" name="J. Proteome Res.">
        <title>Toward a comprehensive characterization of a human cancer cell phosphoproteome.</title>
        <authorList>
            <person name="Zhou H."/>
            <person name="Di Palma S."/>
            <person name="Preisinger C."/>
            <person name="Peng M."/>
            <person name="Polat A.N."/>
            <person name="Heck A.J."/>
            <person name="Mohammed S."/>
        </authorList>
    </citation>
    <scope>PHOSPHORYLATION [LARGE SCALE ANALYSIS] AT SER-3</scope>
    <scope>IDENTIFICATION BY MASS SPECTROMETRY [LARGE SCALE ANALYSIS]</scope>
    <source>
        <tissue>Cervix carcinoma</tissue>
    </source>
</reference>
<reference key="16">
    <citation type="journal article" date="2016" name="Sci. Rep.">
        <title>SAG/RBX2 E3 ligase complexes with UBCH10 and UBE2S E2s to ubiquitylate beta-TrCP1 via K11-linkage for degradation.</title>
        <authorList>
            <person name="Kuang P."/>
            <person name="Tan M."/>
            <person name="Zhou W."/>
            <person name="Zhang Q."/>
            <person name="Sun Y."/>
        </authorList>
    </citation>
    <scope>FUNCTION</scope>
    <scope>CATALYTIC ACTIVITY</scope>
    <scope>PATHWAY</scope>
</reference>
<reference key="17">
    <citation type="journal article" date="2002" name="J. Biol. Chem.">
        <title>Structural and functional analysis of the human mitotic-specific ubiquitin-conjugating enzyme, UbcH10.</title>
        <authorList>
            <person name="Lin Y."/>
            <person name="Hwang W.C."/>
            <person name="Basavappa R."/>
        </authorList>
    </citation>
    <scope>X-RAY CRYSTALLOGRAPHY (1.95 ANGSTROMS)</scope>
</reference>
<reference evidence="14" key="18">
    <citation type="journal article" date="2016" name="Cell">
        <title>Dual RING E3 architectures regulate multiubiquitination and ubiquitin chain elongation by APC/C.</title>
        <authorList>
            <person name="Brown N.G."/>
            <person name="VanderLinden R."/>
            <person name="Watson E.R."/>
            <person name="Weissmann F."/>
            <person name="Ordureau A."/>
            <person name="Wu K.P."/>
            <person name="Zhang W."/>
            <person name="Yu S."/>
            <person name="Mercredi P.Y."/>
            <person name="Harrison J.S."/>
            <person name="Davidson I.F."/>
            <person name="Qiao R."/>
            <person name="Lu Y."/>
            <person name="Dube P."/>
            <person name="Brunner M.R."/>
            <person name="Grace C.R."/>
            <person name="Miller D.J."/>
            <person name="Haselbach D."/>
            <person name="Jarvis M.A."/>
            <person name="Yamaguchi M."/>
            <person name="Yanishevski D."/>
            <person name="Petzold G."/>
            <person name="Sidhu S.S."/>
            <person name="Kuhlman B."/>
            <person name="Kirschner M.W."/>
            <person name="Harper J.W."/>
            <person name="Peters J.M."/>
            <person name="Stark H."/>
            <person name="Schulman B.A."/>
        </authorList>
    </citation>
    <scope>STRUCTURE BY ELECTRON MICROSCOPY (6.40 ANGSTROMS) IN COMPLEX WITH APC/C</scope>
    <scope>INTERACTION WITH ANAPC2</scope>
    <scope>FUNCTION</scope>
</reference>
<comment type="function">
    <text evidence="4 6 7 8 9 10 11">Accepts ubiquitin from the E1 complex and catalyzes its covalent attachment to other proteins. In vitro catalyzes 'Lys-11'- and 'Lys-48'-linked polyubiquitination. Acts as an essential factor of the anaphase promoting complex/cyclosome (APC/C), a cell cycle-regulated ubiquitin ligase that controls progression through mitosis. Acts by initiating 'Lys-11'-linked polyubiquitin chains on APC/C substrates, leading to the degradation of APC/C substrates by the proteasome and promoting mitotic exit.</text>
</comment>
<comment type="catalytic activity">
    <reaction evidence="1 2 6 9 11">
        <text>S-ubiquitinyl-[E1 ubiquitin-activating enzyme]-L-cysteine + [E2 ubiquitin-conjugating enzyme]-L-cysteine = [E1 ubiquitin-activating enzyme]-L-cysteine + S-ubiquitinyl-[E2 ubiquitin-conjugating enzyme]-L-cysteine.</text>
        <dbReference type="EC" id="2.3.2.23"/>
    </reaction>
</comment>
<comment type="catalytic activity">
    <reaction evidence="5">
        <text>S-ubiquitinyl-[E1 ubiquitin-activating enzyme]-L-cysteine + [acceptor protein]-L-lysine = [E1 ubiquitin-activating enzyme]-L-cysteine + N(6)-monoubiquitinyl-[acceptor protein]-L-lysine.</text>
        <dbReference type="EC" id="2.3.2.24"/>
    </reaction>
</comment>
<comment type="pathway">
    <text evidence="1 6">Protein modification; protein ubiquitination.</text>
</comment>
<comment type="subunit">
    <text evidence="7 10">Component of the APC/C complex, composed of at least 14 distinct subunits that assemble into a complex of at least 19 chains with a combined molecular mass of around 1.2 MDa. Within this complex, directly interacts with ANAPC2.</text>
</comment>
<comment type="interaction">
    <interactant intactId="EBI-719691">
        <id>O00762</id>
    </interactant>
    <interactant intactId="EBI-356942">
        <id>P62879</id>
        <label>GNB2</label>
    </interactant>
    <organismsDiffer>false</organismsDiffer>
    <experiments>3</experiments>
</comment>
<comment type="interaction">
    <interactant intactId="EBI-719691">
        <id>O00762</id>
    </interactant>
    <interactant intactId="EBI-1213983">
        <id>Q13164</id>
        <label>MAPK7</label>
    </interactant>
    <organismsDiffer>false</organismsDiffer>
    <experiments>3</experiments>
</comment>
<comment type="alternative products">
    <event type="alternative splicing"/>
    <isoform>
        <id>O00762-1</id>
        <name>1</name>
        <sequence type="displayed"/>
    </isoform>
    <isoform>
        <id>O00762-2</id>
        <name>2</name>
        <sequence type="described" ref="VSP_045647"/>
    </isoform>
    <isoform>
        <id>O00762-3</id>
        <name>3</name>
        <sequence type="described" ref="VSP_045648"/>
    </isoform>
    <isoform>
        <id>O00762-4</id>
        <name>4</name>
        <sequence type="described" ref="VSP_045649"/>
    </isoform>
</comment>
<comment type="PTM">
    <text evidence="4">Autoubiquitinated by the APC/C complex, leading to its degradation by the proteasome. Its degradation plays a central role in APC/C regulation, allowing cyclin-A accumulation before S phase entry. APC/C substrates inhibit the autoubiquitination of UBE2C/UBCH10 but not its E2 function, hence APC/C remaining active until its substrates have been destroyed.</text>
</comment>
<comment type="similarity">
    <text evidence="1">Belongs to the ubiquitin-conjugating enzyme family.</text>
</comment>
<comment type="online information" name="Atlas of Genetics and Cytogenetics in Oncology and Haematology">
    <link uri="https://atlasgeneticsoncology.org/gene/44079/UBE2C"/>
</comment>
<evidence type="ECO:0000255" key="1">
    <source>
        <dbReference type="PROSITE-ProRule" id="PRU00388"/>
    </source>
</evidence>
<evidence type="ECO:0000255" key="2">
    <source>
        <dbReference type="PROSITE-ProRule" id="PRU10133"/>
    </source>
</evidence>
<evidence type="ECO:0000256" key="3">
    <source>
        <dbReference type="SAM" id="MobiDB-lite"/>
    </source>
</evidence>
<evidence type="ECO:0000269" key="4">
    <source>
    </source>
</evidence>
<evidence type="ECO:0000269" key="5">
    <source>
    </source>
</evidence>
<evidence type="ECO:0000269" key="6">
    <source>
    </source>
</evidence>
<evidence type="ECO:0000269" key="7">
    <source>
    </source>
</evidence>
<evidence type="ECO:0000269" key="8">
    <source>
    </source>
</evidence>
<evidence type="ECO:0000269" key="9">
    <source>
    </source>
</evidence>
<evidence type="ECO:0000269" key="10">
    <source>
    </source>
</evidence>
<evidence type="ECO:0000269" key="11">
    <source>
    </source>
</evidence>
<evidence type="ECO:0000269" key="12">
    <source>
    </source>
</evidence>
<evidence type="ECO:0000303" key="13">
    <source>
    </source>
</evidence>
<evidence type="ECO:0007744" key="14">
    <source>
        <dbReference type="PDB" id="5L9U"/>
    </source>
</evidence>
<evidence type="ECO:0007744" key="15">
    <source>
    </source>
</evidence>
<evidence type="ECO:0007744" key="16">
    <source>
    </source>
</evidence>
<evidence type="ECO:0007744" key="17">
    <source>
    </source>
</evidence>
<evidence type="ECO:0007829" key="18">
    <source>
        <dbReference type="PDB" id="4YII"/>
    </source>
</evidence>
<gene>
    <name type="primary">UBE2C</name>
    <name type="synonym">UBCH10</name>
</gene>
<sequence>MASQNRDPAATSVAAARKGAEPSGGAARGPVGKRLQQELMTLMMSGDKGISAFPESDNLFKWVGTIHGAAGTVYEDLRYKLSLEFPSGYPYNAPTVKFLTPCYHPNVDTQGNICLDILKEKWSALYDVRTILLSIQSLLGEPNIDSPLNTHAAELWKNPTAFKKYLQETYSKQVTSQEP</sequence>
<accession>O00762</accession>
<accession>A6NP33</accession>
<accession>E1P5N7</accession>
<accession>G3XAB7</accession>
<feature type="initiator methionine" description="Removed" evidence="15 16">
    <location>
        <position position="1"/>
    </location>
</feature>
<feature type="chain" id="PRO_0000082560" description="Ubiquitin-conjugating enzyme E2 C">
    <location>
        <begin position="2"/>
        <end position="179"/>
    </location>
</feature>
<feature type="domain" description="UBC core" evidence="1">
    <location>
        <begin position="30"/>
        <end position="175"/>
    </location>
</feature>
<feature type="region of interest" description="Disordered" evidence="3">
    <location>
        <begin position="1"/>
        <end position="31"/>
    </location>
</feature>
<feature type="active site" description="Glycyl thioester intermediate" evidence="1">
    <location>
        <position position="114"/>
    </location>
</feature>
<feature type="modified residue" description="N-acetylalanine" evidence="15 16">
    <location>
        <position position="2"/>
    </location>
</feature>
<feature type="modified residue" description="Phosphoserine" evidence="16 17">
    <location>
        <position position="3"/>
    </location>
</feature>
<feature type="splice variant" id="VSP_045647" description="In isoform 2." evidence="13">
    <location>
        <begin position="1"/>
        <end position="39"/>
    </location>
</feature>
<feature type="splice variant" id="VSP_045648" description="In isoform 3." evidence="13">
    <location>
        <begin position="44"/>
        <end position="72"/>
    </location>
</feature>
<feature type="splice variant" id="VSP_045649" description="In isoform 4." evidence="13">
    <original>VYEDLRYKLSLEFPSGYPYNAPTVKFLTPCYHPNVDTQGNICLDILKEKWSALYDVRTILLSIQSLLG</original>
    <variation>AVGSIRTSSTVCLLSGPRETQDSSKPLVWGLGWDMRLLLELTLQLFLQMP</variation>
    <location>
        <begin position="73"/>
        <end position="140"/>
    </location>
</feature>
<feature type="sequence variant" id="VAR_007694">
    <original>G</original>
    <variation>D</variation>
    <location>
        <position position="25"/>
    </location>
</feature>
<feature type="mutagenesis site" description="Loss of function; inhibition of cyclin-B degradation." evidence="4 12">
    <original>C</original>
    <variation>S</variation>
    <location>
        <position position="114"/>
    </location>
</feature>
<feature type="helix" evidence="18">
    <location>
        <begin position="30"/>
        <end position="45"/>
    </location>
</feature>
<feature type="strand" evidence="18">
    <location>
        <begin position="50"/>
        <end position="54"/>
    </location>
</feature>
<feature type="strand" evidence="18">
    <location>
        <begin position="61"/>
        <end position="68"/>
    </location>
</feature>
<feature type="strand" evidence="18">
    <location>
        <begin position="78"/>
        <end position="84"/>
    </location>
</feature>
<feature type="turn" evidence="18">
    <location>
        <begin position="87"/>
        <end position="91"/>
    </location>
</feature>
<feature type="strand" evidence="18">
    <location>
        <begin position="95"/>
        <end position="100"/>
    </location>
</feature>
<feature type="strand" evidence="18">
    <location>
        <begin position="111"/>
        <end position="113"/>
    </location>
</feature>
<feature type="helix" evidence="18">
    <location>
        <begin position="116"/>
        <end position="118"/>
    </location>
</feature>
<feature type="turn" evidence="18">
    <location>
        <begin position="119"/>
        <end position="121"/>
    </location>
</feature>
<feature type="helix" evidence="18">
    <location>
        <begin position="128"/>
        <end position="140"/>
    </location>
</feature>
<feature type="helix" evidence="18">
    <location>
        <begin position="150"/>
        <end position="155"/>
    </location>
</feature>
<feature type="helix" evidence="18">
    <location>
        <begin position="159"/>
        <end position="172"/>
    </location>
</feature>
<protein>
    <recommendedName>
        <fullName>Ubiquitin-conjugating enzyme E2 C</fullName>
        <ecNumber evidence="6 9 11">2.3.2.23</ecNumber>
    </recommendedName>
    <alternativeName>
        <fullName>(E3-independent) E2 ubiquitin-conjugating enzyme C</fullName>
        <ecNumber evidence="5">2.3.2.24</ecNumber>
    </alternativeName>
    <alternativeName>
        <fullName>E2 ubiquitin-conjugating enzyme C</fullName>
    </alternativeName>
    <alternativeName>
        <fullName>UbcH10</fullName>
    </alternativeName>
    <alternativeName>
        <fullName>Ubiquitin carrier protein C</fullName>
    </alternativeName>
    <alternativeName>
        <fullName>Ubiquitin-protein ligase C</fullName>
    </alternativeName>
</protein>